<reference key="1">
    <citation type="journal article" date="2005" name="Science">
        <title>Life at depth: Photobacterium profundum genome sequence and expression analysis.</title>
        <authorList>
            <person name="Vezzi A."/>
            <person name="Campanaro S."/>
            <person name="D'Angelo M."/>
            <person name="Simonato F."/>
            <person name="Vitulo N."/>
            <person name="Lauro F.M."/>
            <person name="Cestaro A."/>
            <person name="Malacrida G."/>
            <person name="Simionati B."/>
            <person name="Cannata N."/>
            <person name="Romualdi C."/>
            <person name="Bartlett D.H."/>
            <person name="Valle G."/>
        </authorList>
    </citation>
    <scope>NUCLEOTIDE SEQUENCE [LARGE SCALE GENOMIC DNA]</scope>
    <source>
        <strain>ATCC BAA-1253 / SS9</strain>
    </source>
</reference>
<dbReference type="EMBL" id="CR378673">
    <property type="protein sequence ID" value="CAG21636.1"/>
    <property type="molecule type" value="Genomic_DNA"/>
</dbReference>
<dbReference type="RefSeq" id="WP_011219883.1">
    <property type="nucleotide sequence ID" value="NC_006370.1"/>
</dbReference>
<dbReference type="SMR" id="Q6LM42"/>
<dbReference type="STRING" id="298386.PBPRA3338"/>
<dbReference type="KEGG" id="ppr:PBPRA3338"/>
<dbReference type="eggNOG" id="COG2965">
    <property type="taxonomic scope" value="Bacteria"/>
</dbReference>
<dbReference type="HOGENOM" id="CLU_166075_0_0_6"/>
<dbReference type="Proteomes" id="UP000000593">
    <property type="component" value="Chromosome 1"/>
</dbReference>
<dbReference type="GO" id="GO:1990077">
    <property type="term" value="C:primosome complex"/>
    <property type="evidence" value="ECO:0007669"/>
    <property type="project" value="UniProtKB-KW"/>
</dbReference>
<dbReference type="GO" id="GO:0003697">
    <property type="term" value="F:single-stranded DNA binding"/>
    <property type="evidence" value="ECO:0007669"/>
    <property type="project" value="UniProtKB-UniRule"/>
</dbReference>
<dbReference type="GO" id="GO:0006269">
    <property type="term" value="P:DNA replication, synthesis of primer"/>
    <property type="evidence" value="ECO:0007669"/>
    <property type="project" value="UniProtKB-KW"/>
</dbReference>
<dbReference type="CDD" id="cd04496">
    <property type="entry name" value="SSB_OBF"/>
    <property type="match status" value="1"/>
</dbReference>
<dbReference type="Gene3D" id="2.40.50.140">
    <property type="entry name" value="Nucleic acid-binding proteins"/>
    <property type="match status" value="1"/>
</dbReference>
<dbReference type="HAMAP" id="MF_00720">
    <property type="entry name" value="PriB"/>
    <property type="match status" value="1"/>
</dbReference>
<dbReference type="InterPro" id="IPR012340">
    <property type="entry name" value="NA-bd_OB-fold"/>
</dbReference>
<dbReference type="InterPro" id="IPR000424">
    <property type="entry name" value="Primosome_PriB/ssb"/>
</dbReference>
<dbReference type="InterPro" id="IPR023646">
    <property type="entry name" value="Prisomal_replication_PriB"/>
</dbReference>
<dbReference type="NCBIfam" id="TIGR04418">
    <property type="entry name" value="PriB_gamma"/>
    <property type="match status" value="1"/>
</dbReference>
<dbReference type="Pfam" id="PF22657">
    <property type="entry name" value="SSB_1"/>
    <property type="match status" value="1"/>
</dbReference>
<dbReference type="PIRSF" id="PIRSF003135">
    <property type="entry name" value="Primosomal_n"/>
    <property type="match status" value="1"/>
</dbReference>
<dbReference type="SUPFAM" id="SSF50249">
    <property type="entry name" value="Nucleic acid-binding proteins"/>
    <property type="match status" value="1"/>
</dbReference>
<dbReference type="PROSITE" id="PS50935">
    <property type="entry name" value="SSB"/>
    <property type="match status" value="1"/>
</dbReference>
<organism>
    <name type="scientific">Photobacterium profundum (strain SS9)</name>
    <dbReference type="NCBI Taxonomy" id="298386"/>
    <lineage>
        <taxon>Bacteria</taxon>
        <taxon>Pseudomonadati</taxon>
        <taxon>Pseudomonadota</taxon>
        <taxon>Gammaproteobacteria</taxon>
        <taxon>Vibrionales</taxon>
        <taxon>Vibrionaceae</taxon>
        <taxon>Photobacterium</taxon>
    </lineage>
</organism>
<protein>
    <recommendedName>
        <fullName evidence="1">Replication restart protein PriB</fullName>
    </recommendedName>
</protein>
<keyword id="KW-0235">DNA replication</keyword>
<keyword id="KW-0238">DNA-binding</keyword>
<keyword id="KW-0639">Primosome</keyword>
<keyword id="KW-1185">Reference proteome</keyword>
<name>PRIB_PHOPR</name>
<accession>Q6LM42</accession>
<sequence>MTNRLELSGVIAKDPKRSQSPAGVPHCHFVLEHRSYQREADLPRQVYCYINVVSSGKGLQVLTQDLAVGVHTKVAGFISYQTGRNGIGKLVLHADHIEIICSGD</sequence>
<proteinExistence type="inferred from homology"/>
<feature type="chain" id="PRO_0000199059" description="Replication restart protein PriB">
    <location>
        <begin position="1"/>
        <end position="104"/>
    </location>
</feature>
<feature type="domain" description="SSB" evidence="1">
    <location>
        <begin position="1"/>
        <end position="101"/>
    </location>
</feature>
<gene>
    <name evidence="1" type="primary">priB</name>
    <name type="ordered locus">PBPRA3338</name>
</gene>
<comment type="function">
    <text evidence="1">Involved in the restart of stalled replication forks, which reloads the replicative helicase on sites other than the origin of replication; the PriA-PriB pathway is the major replication restart pathway. During primosome assembly it facilitates complex formation between PriA and DnaT on DNA; stabilizes PriA on DNA. Stimulates the DNA unwinding activity of PriA helicase.</text>
</comment>
<comment type="subunit">
    <text evidence="1">Homodimer. Interacts with PriA and DnaT. Component of the replication restart primosome. Primosome assembly occurs via a 'hand-off' mechanism. PriA binds to replication forks, subsequently PriB then DnaT bind; DnaT then displaces ssDNA to generate the helicase loading substrate.</text>
</comment>
<comment type="similarity">
    <text evidence="1">Belongs to the PriB family.</text>
</comment>
<evidence type="ECO:0000255" key="1">
    <source>
        <dbReference type="HAMAP-Rule" id="MF_00720"/>
    </source>
</evidence>